<feature type="chain" id="PRO_0000276715" description="Small ribosomal subunit protein uS14c">
    <location>
        <begin position="1"/>
        <end position="100"/>
    </location>
</feature>
<name>RR14_THAPS</name>
<keyword id="KW-0150">Chloroplast</keyword>
<keyword id="KW-0934">Plastid</keyword>
<keyword id="KW-0687">Ribonucleoprotein</keyword>
<keyword id="KW-0689">Ribosomal protein</keyword>
<keyword id="KW-0694">RNA-binding</keyword>
<keyword id="KW-0699">rRNA-binding</keyword>
<sequence>MAKRSMIEREKKRIKLHQKYESKRQALLEEYNSTSDFNLKLEIHSKIQRLPRNSSKIRIRNRCWKTGRPRGYYRDFGVSRHVLREMAHQCLLPGVTKSSW</sequence>
<accession>A0T0S2</accession>
<organism>
    <name type="scientific">Thalassiosira pseudonana</name>
    <name type="common">Marine diatom</name>
    <name type="synonym">Cyclotella nana</name>
    <dbReference type="NCBI Taxonomy" id="35128"/>
    <lineage>
        <taxon>Eukaryota</taxon>
        <taxon>Sar</taxon>
        <taxon>Stramenopiles</taxon>
        <taxon>Ochrophyta</taxon>
        <taxon>Bacillariophyta</taxon>
        <taxon>Coscinodiscophyceae</taxon>
        <taxon>Thalassiosirophycidae</taxon>
        <taxon>Thalassiosirales</taxon>
        <taxon>Thalassiosiraceae</taxon>
        <taxon>Thalassiosira</taxon>
    </lineage>
</organism>
<evidence type="ECO:0000255" key="1">
    <source>
        <dbReference type="HAMAP-Rule" id="MF_00537"/>
    </source>
</evidence>
<evidence type="ECO:0000305" key="2"/>
<comment type="function">
    <text evidence="1">Binds 16S rRNA, required for the assembly of 30S particles.</text>
</comment>
<comment type="subunit">
    <text evidence="1">Part of the 30S ribosomal subunit.</text>
</comment>
<comment type="subcellular location">
    <subcellularLocation>
        <location>Plastid</location>
        <location>Chloroplast</location>
    </subcellularLocation>
</comment>
<comment type="similarity">
    <text evidence="1">Belongs to the universal ribosomal protein uS14 family.</text>
</comment>
<geneLocation type="chloroplast"/>
<proteinExistence type="inferred from homology"/>
<gene>
    <name evidence="1" type="primary">rps14</name>
</gene>
<reference key="1">
    <citation type="journal article" date="2007" name="Mol. Genet. Genomics">
        <title>Chloroplast genomes of the diatoms Phaeodactylum tricornutum and Thalassiosira pseudonana: comparison with other plastid genomes of the red lineage.</title>
        <authorList>
            <person name="Oudot-Le Secq M.-P."/>
            <person name="Grimwood J."/>
            <person name="Shapiro H."/>
            <person name="Armbrust E.V."/>
            <person name="Bowler C."/>
            <person name="Green B.R."/>
        </authorList>
    </citation>
    <scope>NUCLEOTIDE SEQUENCE [LARGE SCALE GENOMIC DNA]</scope>
    <source>
        <strain>CCMP1335 / NEPCC58 / CCAP 1085/12</strain>
    </source>
</reference>
<protein>
    <recommendedName>
        <fullName evidence="1">Small ribosomal subunit protein uS14c</fullName>
    </recommendedName>
    <alternativeName>
        <fullName evidence="2">30S ribosomal protein S14, chloroplastic</fullName>
    </alternativeName>
</protein>
<dbReference type="EMBL" id="EF067921">
    <property type="protein sequence ID" value="ABK20757.1"/>
    <property type="molecule type" value="Genomic_DNA"/>
</dbReference>
<dbReference type="RefSeq" id="YP_874534.1">
    <property type="nucleotide sequence ID" value="NC_008589.1"/>
</dbReference>
<dbReference type="SMR" id="A0T0S2"/>
<dbReference type="FunCoup" id="A0T0S2">
    <property type="interactions" value="153"/>
</dbReference>
<dbReference type="STRING" id="35128.A0T0S2"/>
<dbReference type="PaxDb" id="35128-Thapsdraft977"/>
<dbReference type="GeneID" id="4524740"/>
<dbReference type="eggNOG" id="KOG1741">
    <property type="taxonomic scope" value="Eukaryota"/>
</dbReference>
<dbReference type="InParanoid" id="A0T0S2"/>
<dbReference type="OMA" id="RIKFRDL"/>
<dbReference type="GO" id="GO:0009507">
    <property type="term" value="C:chloroplast"/>
    <property type="evidence" value="ECO:0007669"/>
    <property type="project" value="UniProtKB-SubCell"/>
</dbReference>
<dbReference type="GO" id="GO:0015935">
    <property type="term" value="C:small ribosomal subunit"/>
    <property type="evidence" value="ECO:0000318"/>
    <property type="project" value="GO_Central"/>
</dbReference>
<dbReference type="GO" id="GO:0019843">
    <property type="term" value="F:rRNA binding"/>
    <property type="evidence" value="ECO:0007669"/>
    <property type="project" value="UniProtKB-UniRule"/>
</dbReference>
<dbReference type="GO" id="GO:0003735">
    <property type="term" value="F:structural constituent of ribosome"/>
    <property type="evidence" value="ECO:0000318"/>
    <property type="project" value="GO_Central"/>
</dbReference>
<dbReference type="GO" id="GO:0006412">
    <property type="term" value="P:translation"/>
    <property type="evidence" value="ECO:0000318"/>
    <property type="project" value="GO_Central"/>
</dbReference>
<dbReference type="FunFam" id="1.10.287.1480:FF:000001">
    <property type="entry name" value="30S ribosomal protein S14"/>
    <property type="match status" value="1"/>
</dbReference>
<dbReference type="Gene3D" id="1.10.287.1480">
    <property type="match status" value="1"/>
</dbReference>
<dbReference type="HAMAP" id="MF_00537">
    <property type="entry name" value="Ribosomal_uS14_1"/>
    <property type="match status" value="1"/>
</dbReference>
<dbReference type="InterPro" id="IPR001209">
    <property type="entry name" value="Ribosomal_uS14"/>
</dbReference>
<dbReference type="InterPro" id="IPR023036">
    <property type="entry name" value="Ribosomal_uS14_bac/plastid"/>
</dbReference>
<dbReference type="InterPro" id="IPR018271">
    <property type="entry name" value="Ribosomal_uS14_CS"/>
</dbReference>
<dbReference type="NCBIfam" id="NF006477">
    <property type="entry name" value="PRK08881.1"/>
    <property type="match status" value="1"/>
</dbReference>
<dbReference type="PANTHER" id="PTHR19836">
    <property type="entry name" value="30S RIBOSOMAL PROTEIN S14"/>
    <property type="match status" value="1"/>
</dbReference>
<dbReference type="PANTHER" id="PTHR19836:SF19">
    <property type="entry name" value="SMALL RIBOSOMAL SUBUNIT PROTEIN US14M"/>
    <property type="match status" value="1"/>
</dbReference>
<dbReference type="Pfam" id="PF00253">
    <property type="entry name" value="Ribosomal_S14"/>
    <property type="match status" value="1"/>
</dbReference>
<dbReference type="SUPFAM" id="SSF57716">
    <property type="entry name" value="Glucocorticoid receptor-like (DNA-binding domain)"/>
    <property type="match status" value="1"/>
</dbReference>
<dbReference type="PROSITE" id="PS00527">
    <property type="entry name" value="RIBOSOMAL_S14"/>
    <property type="match status" value="1"/>
</dbReference>